<protein>
    <recommendedName>
        <fullName evidence="1">GTPase Der</fullName>
    </recommendedName>
    <alternativeName>
        <fullName evidence="1">GTP-binding protein EngA</fullName>
    </alternativeName>
</protein>
<name>DER_BACC0</name>
<comment type="function">
    <text evidence="1">GTPase that plays an essential role in the late steps of ribosome biogenesis.</text>
</comment>
<comment type="subunit">
    <text evidence="1">Associates with the 50S ribosomal subunit.</text>
</comment>
<comment type="similarity">
    <text evidence="1">Belongs to the TRAFAC class TrmE-Era-EngA-EngB-Septin-like GTPase superfamily. EngA (Der) GTPase family.</text>
</comment>
<dbReference type="EMBL" id="CP001283">
    <property type="protein sequence ID" value="ACK89239.1"/>
    <property type="molecule type" value="Genomic_DNA"/>
</dbReference>
<dbReference type="RefSeq" id="WP_001125893.1">
    <property type="nucleotide sequence ID" value="NC_011773.1"/>
</dbReference>
<dbReference type="SMR" id="B7JGY9"/>
<dbReference type="GeneID" id="93009536"/>
<dbReference type="KEGG" id="bcu:BCAH820_1598"/>
<dbReference type="HOGENOM" id="CLU_016077_6_2_9"/>
<dbReference type="Proteomes" id="UP000001363">
    <property type="component" value="Chromosome"/>
</dbReference>
<dbReference type="GO" id="GO:0005525">
    <property type="term" value="F:GTP binding"/>
    <property type="evidence" value="ECO:0007669"/>
    <property type="project" value="UniProtKB-UniRule"/>
</dbReference>
<dbReference type="GO" id="GO:0043022">
    <property type="term" value="F:ribosome binding"/>
    <property type="evidence" value="ECO:0007669"/>
    <property type="project" value="TreeGrafter"/>
</dbReference>
<dbReference type="GO" id="GO:0042254">
    <property type="term" value="P:ribosome biogenesis"/>
    <property type="evidence" value="ECO:0007669"/>
    <property type="project" value="UniProtKB-KW"/>
</dbReference>
<dbReference type="CDD" id="cd01894">
    <property type="entry name" value="EngA1"/>
    <property type="match status" value="1"/>
</dbReference>
<dbReference type="CDD" id="cd01895">
    <property type="entry name" value="EngA2"/>
    <property type="match status" value="1"/>
</dbReference>
<dbReference type="FunFam" id="3.30.300.20:FF:000004">
    <property type="entry name" value="GTPase Der"/>
    <property type="match status" value="1"/>
</dbReference>
<dbReference type="FunFam" id="3.40.50.300:FF:000040">
    <property type="entry name" value="GTPase Der"/>
    <property type="match status" value="1"/>
</dbReference>
<dbReference type="FunFam" id="3.40.50.300:FF:000057">
    <property type="entry name" value="GTPase Der"/>
    <property type="match status" value="1"/>
</dbReference>
<dbReference type="Gene3D" id="3.30.300.20">
    <property type="match status" value="1"/>
</dbReference>
<dbReference type="Gene3D" id="3.40.50.300">
    <property type="entry name" value="P-loop containing nucleotide triphosphate hydrolases"/>
    <property type="match status" value="2"/>
</dbReference>
<dbReference type="HAMAP" id="MF_00195">
    <property type="entry name" value="GTPase_Der"/>
    <property type="match status" value="1"/>
</dbReference>
<dbReference type="InterPro" id="IPR031166">
    <property type="entry name" value="G_ENGA"/>
</dbReference>
<dbReference type="InterPro" id="IPR006073">
    <property type="entry name" value="GTP-bd"/>
</dbReference>
<dbReference type="InterPro" id="IPR016484">
    <property type="entry name" value="GTPase_Der"/>
</dbReference>
<dbReference type="InterPro" id="IPR032859">
    <property type="entry name" value="KH_dom-like"/>
</dbReference>
<dbReference type="InterPro" id="IPR015946">
    <property type="entry name" value="KH_dom-like_a/b"/>
</dbReference>
<dbReference type="InterPro" id="IPR027417">
    <property type="entry name" value="P-loop_NTPase"/>
</dbReference>
<dbReference type="InterPro" id="IPR005225">
    <property type="entry name" value="Small_GTP-bd"/>
</dbReference>
<dbReference type="NCBIfam" id="TIGR03594">
    <property type="entry name" value="GTPase_EngA"/>
    <property type="match status" value="1"/>
</dbReference>
<dbReference type="NCBIfam" id="TIGR00231">
    <property type="entry name" value="small_GTP"/>
    <property type="match status" value="2"/>
</dbReference>
<dbReference type="PANTHER" id="PTHR43834">
    <property type="entry name" value="GTPASE DER"/>
    <property type="match status" value="1"/>
</dbReference>
<dbReference type="PANTHER" id="PTHR43834:SF6">
    <property type="entry name" value="GTPASE DER"/>
    <property type="match status" value="1"/>
</dbReference>
<dbReference type="Pfam" id="PF14714">
    <property type="entry name" value="KH_dom-like"/>
    <property type="match status" value="1"/>
</dbReference>
<dbReference type="Pfam" id="PF01926">
    <property type="entry name" value="MMR_HSR1"/>
    <property type="match status" value="2"/>
</dbReference>
<dbReference type="PIRSF" id="PIRSF006485">
    <property type="entry name" value="GTP-binding_EngA"/>
    <property type="match status" value="1"/>
</dbReference>
<dbReference type="PRINTS" id="PR00326">
    <property type="entry name" value="GTP1OBG"/>
</dbReference>
<dbReference type="SUPFAM" id="SSF52540">
    <property type="entry name" value="P-loop containing nucleoside triphosphate hydrolases"/>
    <property type="match status" value="2"/>
</dbReference>
<dbReference type="PROSITE" id="PS51712">
    <property type="entry name" value="G_ENGA"/>
    <property type="match status" value="2"/>
</dbReference>
<sequence>MPKPVIAIVGRPNVGKSTIFNRIVGERVSIVEDIPGVTRDRIYSAGEWLNHEFNIIDTGGIDIGDEPFLTQIRQQAEVAIDEADVIIFMTNGRDGVTAADEEVAKILYRSNKPVVLAVNKVDNPEMRSDIYDFYALGFGEPFPISGTHGLGLGDLLDEAAQHFPKIEEDGYDEDTIRFSLIGRPNVGKSSLVNALLGQERVIVSNVAGTTRDAVDTPYSKDGKDYVIIDTAGMRKKGKVYESTEKYSVLRALRAIERSDVVLVVLDGEEGIIEQDKKIAGYAHDSGRAVVIVVNKWDAVKKDEKTMKAFEENIRAHFQFLEYAPIVFLSAKTRKRTQTLIPVIDEVNESHSIRIQTNVLNDVIMDAVAMNPTPTHNGSRLKIFYATQVAVKPPTFVVFVNDPELLHFSYERFLKNRLRESFGFVGTPIHIIARARD</sequence>
<evidence type="ECO:0000255" key="1">
    <source>
        <dbReference type="HAMAP-Rule" id="MF_00195"/>
    </source>
</evidence>
<gene>
    <name evidence="1" type="primary">der</name>
    <name type="synonym">engA</name>
    <name type="ordered locus">BCAH820_1598</name>
</gene>
<accession>B7JGY9</accession>
<proteinExistence type="inferred from homology"/>
<keyword id="KW-0342">GTP-binding</keyword>
<keyword id="KW-0547">Nucleotide-binding</keyword>
<keyword id="KW-0677">Repeat</keyword>
<keyword id="KW-0690">Ribosome biogenesis</keyword>
<organism>
    <name type="scientific">Bacillus cereus (strain AH820)</name>
    <dbReference type="NCBI Taxonomy" id="405535"/>
    <lineage>
        <taxon>Bacteria</taxon>
        <taxon>Bacillati</taxon>
        <taxon>Bacillota</taxon>
        <taxon>Bacilli</taxon>
        <taxon>Bacillales</taxon>
        <taxon>Bacillaceae</taxon>
        <taxon>Bacillus</taxon>
        <taxon>Bacillus cereus group</taxon>
    </lineage>
</organism>
<feature type="chain" id="PRO_1000118635" description="GTPase Der">
    <location>
        <begin position="1"/>
        <end position="436"/>
    </location>
</feature>
<feature type="domain" description="EngA-type G 1">
    <location>
        <begin position="4"/>
        <end position="167"/>
    </location>
</feature>
<feature type="domain" description="EngA-type G 2">
    <location>
        <begin position="176"/>
        <end position="351"/>
    </location>
</feature>
<feature type="domain" description="KH-like" evidence="1">
    <location>
        <begin position="352"/>
        <end position="436"/>
    </location>
</feature>
<feature type="binding site" evidence="1">
    <location>
        <begin position="10"/>
        <end position="17"/>
    </location>
    <ligand>
        <name>GTP</name>
        <dbReference type="ChEBI" id="CHEBI:37565"/>
        <label>1</label>
    </ligand>
</feature>
<feature type="binding site" evidence="1">
    <location>
        <begin position="57"/>
        <end position="61"/>
    </location>
    <ligand>
        <name>GTP</name>
        <dbReference type="ChEBI" id="CHEBI:37565"/>
        <label>1</label>
    </ligand>
</feature>
<feature type="binding site" evidence="1">
    <location>
        <begin position="119"/>
        <end position="122"/>
    </location>
    <ligand>
        <name>GTP</name>
        <dbReference type="ChEBI" id="CHEBI:37565"/>
        <label>1</label>
    </ligand>
</feature>
<feature type="binding site" evidence="1">
    <location>
        <begin position="182"/>
        <end position="189"/>
    </location>
    <ligand>
        <name>GTP</name>
        <dbReference type="ChEBI" id="CHEBI:37565"/>
        <label>2</label>
    </ligand>
</feature>
<feature type="binding site" evidence="1">
    <location>
        <begin position="229"/>
        <end position="233"/>
    </location>
    <ligand>
        <name>GTP</name>
        <dbReference type="ChEBI" id="CHEBI:37565"/>
        <label>2</label>
    </ligand>
</feature>
<feature type="binding site" evidence="1">
    <location>
        <begin position="294"/>
        <end position="297"/>
    </location>
    <ligand>
        <name>GTP</name>
        <dbReference type="ChEBI" id="CHEBI:37565"/>
        <label>2</label>
    </ligand>
</feature>
<reference key="1">
    <citation type="submission" date="2008-10" db="EMBL/GenBank/DDBJ databases">
        <title>Genome sequence of Bacillus cereus AH820.</title>
        <authorList>
            <person name="Dodson R.J."/>
            <person name="Durkin A.S."/>
            <person name="Rosovitz M.J."/>
            <person name="Rasko D.A."/>
            <person name="Hoffmaster A."/>
            <person name="Ravel J."/>
            <person name="Sutton G."/>
        </authorList>
    </citation>
    <scope>NUCLEOTIDE SEQUENCE [LARGE SCALE GENOMIC DNA]</scope>
    <source>
        <strain>AH820</strain>
    </source>
</reference>